<gene>
    <name type="primary">OPI8</name>
    <name type="ordered locus">YKR035C</name>
</gene>
<protein>
    <recommendedName>
        <fullName>Putative uncharacterized protein OPI8</fullName>
    </recommendedName>
</protein>
<comment type="disruption phenotype">
    <text evidence="1">Deletion results in the overproduction and secretion of inositol to the growth medium.</text>
</comment>
<comment type="miscellaneous">
    <text evidence="2">Partially overlaps DID2. Disruption phenotypes caused by deletion of this gene may also be a result of a defect in its overlapping gene.</text>
</comment>
<comment type="caution">
    <text evidence="3">Product of a dubious gene prediction unlikely to encode a functional protein. Because of that it is not part of the S.cerevisiae S288c complete/reference proteome set.</text>
</comment>
<proteinExistence type="uncertain"/>
<accession>P36129</accession>
<evidence type="ECO:0000269" key="1">
    <source>
    </source>
</evidence>
<evidence type="ECO:0000305" key="2"/>
<evidence type="ECO:0000305" key="3">
    <source>
    </source>
</evidence>
<sequence length="213" mass="23239">MFFQPLNALSLCASLSSFSSSTLTSFAFISGTLSSFALCFNSMPFSSATLLISSSTLSLSTSMASEFTPISSYTLTLVSKSSNCCSNLSIIMVICWRFIFCNALSMPLQTCPIDADTCLIVTAVCTLDATESTRDANFNSCNLSFFFLIALDAYIRDISSFSLRARLSLLVSCFSSFEALLACFCNCFDVNFSWKRVFSKPAAELRDISQCDV</sequence>
<reference key="1">
    <citation type="journal article" date="1994" name="Nature">
        <title>Complete DNA sequence of yeast chromosome XI.</title>
        <authorList>
            <person name="Dujon B."/>
            <person name="Alexandraki D."/>
            <person name="Andre B."/>
            <person name="Ansorge W."/>
            <person name="Baladron V."/>
            <person name="Ballesta J.P.G."/>
            <person name="Banrevi A."/>
            <person name="Bolle P.-A."/>
            <person name="Bolotin-Fukuhara M."/>
            <person name="Bossier P."/>
            <person name="Bou G."/>
            <person name="Boyer J."/>
            <person name="Buitrago M.J."/>
            <person name="Cheret G."/>
            <person name="Colleaux L."/>
            <person name="Daignan-Fornier B."/>
            <person name="del Rey F."/>
            <person name="Dion C."/>
            <person name="Domdey H."/>
            <person name="Duesterhoeft A."/>
            <person name="Duesterhus S."/>
            <person name="Entian K.-D."/>
            <person name="Erfle H."/>
            <person name="Esteban P.F."/>
            <person name="Feldmann H."/>
            <person name="Fernandes L."/>
            <person name="Fobo G.M."/>
            <person name="Fritz C."/>
            <person name="Fukuhara H."/>
            <person name="Gabel C."/>
            <person name="Gaillon L."/>
            <person name="Garcia-Cantalejo J.M."/>
            <person name="Garcia-Ramirez J.J."/>
            <person name="Gent M.E."/>
            <person name="Ghazvini M."/>
            <person name="Goffeau A."/>
            <person name="Gonzalez A."/>
            <person name="Grothues D."/>
            <person name="Guerreiro P."/>
            <person name="Hegemann J.H."/>
            <person name="Hewitt N."/>
            <person name="Hilger F."/>
            <person name="Hollenberg C.P."/>
            <person name="Horaitis O."/>
            <person name="Indge K.J."/>
            <person name="Jacquier A."/>
            <person name="James C.M."/>
            <person name="Jauniaux J.-C."/>
            <person name="Jimenez A."/>
            <person name="Keuchel H."/>
            <person name="Kirchrath L."/>
            <person name="Kleine K."/>
            <person name="Koetter P."/>
            <person name="Legrain P."/>
            <person name="Liebl S."/>
            <person name="Louis E.J."/>
            <person name="Maia e Silva A."/>
            <person name="Marck C."/>
            <person name="Monnier A.-L."/>
            <person name="Moestl D."/>
            <person name="Mueller S."/>
            <person name="Obermaier B."/>
            <person name="Oliver S.G."/>
            <person name="Pallier C."/>
            <person name="Pascolo S."/>
            <person name="Pfeiffer F."/>
            <person name="Philippsen P."/>
            <person name="Planta R.J."/>
            <person name="Pohl F.M."/>
            <person name="Pohl T.M."/>
            <person name="Poehlmann R."/>
            <person name="Portetelle D."/>
            <person name="Purnelle B."/>
            <person name="Puzos V."/>
            <person name="Ramezani Rad M."/>
            <person name="Rasmussen S.W."/>
            <person name="Remacha M.A."/>
            <person name="Revuelta J.L."/>
            <person name="Richard G.-F."/>
            <person name="Rieger M."/>
            <person name="Rodrigues-Pousada C."/>
            <person name="Rose M."/>
            <person name="Rupp T."/>
            <person name="Santos M.A."/>
            <person name="Schwager C."/>
            <person name="Sensen C."/>
            <person name="Skala J."/>
            <person name="Soares H."/>
            <person name="Sor F."/>
            <person name="Stegemann J."/>
            <person name="Tettelin H."/>
            <person name="Thierry A."/>
            <person name="Tzermia M."/>
            <person name="Urrestarazu L.A."/>
            <person name="van Dyck L."/>
            <person name="van Vliet-Reedijk J.C."/>
            <person name="Valens M."/>
            <person name="Vandenbol M."/>
            <person name="Vilela C."/>
            <person name="Vissers S."/>
            <person name="von Wettstein D."/>
            <person name="Voss H."/>
            <person name="Wiemann S."/>
            <person name="Xu G."/>
            <person name="Zimmermann J."/>
            <person name="Haasemann M."/>
            <person name="Becker I."/>
            <person name="Mewes H.-W."/>
        </authorList>
    </citation>
    <scope>NUCLEOTIDE SEQUENCE [LARGE SCALE GENOMIC DNA]</scope>
    <source>
        <strain>ATCC 204508 / S288c</strain>
    </source>
</reference>
<reference key="2">
    <citation type="journal article" date="2014" name="G3 (Bethesda)">
        <title>The reference genome sequence of Saccharomyces cerevisiae: Then and now.</title>
        <authorList>
            <person name="Engel S.R."/>
            <person name="Dietrich F.S."/>
            <person name="Fisk D.G."/>
            <person name="Binkley G."/>
            <person name="Balakrishnan R."/>
            <person name="Costanzo M.C."/>
            <person name="Dwight S.S."/>
            <person name="Hitz B.C."/>
            <person name="Karra K."/>
            <person name="Nash R.S."/>
            <person name="Weng S."/>
            <person name="Wong E.D."/>
            <person name="Lloyd P."/>
            <person name="Skrzypek M.S."/>
            <person name="Miyasato S.R."/>
            <person name="Simison M."/>
            <person name="Cherry J.M."/>
        </authorList>
    </citation>
    <scope>GENOME REANNOTATION</scope>
    <source>
        <strain>ATCC 204508 / S288c</strain>
    </source>
</reference>
<reference key="3">
    <citation type="journal article" date="2006" name="Genetics">
        <title>Genomic analysis of the Opi- phenotype.</title>
        <authorList>
            <person name="Hancock L.C."/>
            <person name="Behta R.P."/>
            <person name="Lopes J.M."/>
        </authorList>
    </citation>
    <scope>DISRUPTION PHENOTYPE</scope>
</reference>
<dbReference type="EMBL" id="Z28260">
    <property type="protein sequence ID" value="CAA82109.1"/>
    <property type="molecule type" value="Genomic_DNA"/>
</dbReference>
<dbReference type="PIR" id="S38107">
    <property type="entry name" value="S38107"/>
</dbReference>
<dbReference type="DIP" id="DIP-2090N"/>
<dbReference type="STRING" id="4932.YKR035C"/>
<dbReference type="PaxDb" id="4932-YKR035C"/>
<dbReference type="EnsemblFungi" id="YKR035C_mRNA">
    <property type="protein sequence ID" value="YKR035C"/>
    <property type="gene ID" value="YKR035C"/>
</dbReference>
<dbReference type="AGR" id="SGD:S000001743"/>
<dbReference type="SGD" id="S000001743">
    <property type="gene designation" value="OPI8"/>
</dbReference>
<dbReference type="HOGENOM" id="CLU_1295309_0_0_1"/>
<feature type="chain" id="PRO_0000203208" description="Putative uncharacterized protein OPI8">
    <location>
        <begin position="1"/>
        <end position="213"/>
    </location>
</feature>
<organism>
    <name type="scientific">Saccharomyces cerevisiae (strain ATCC 204508 / S288c)</name>
    <name type="common">Baker's yeast</name>
    <dbReference type="NCBI Taxonomy" id="559292"/>
    <lineage>
        <taxon>Eukaryota</taxon>
        <taxon>Fungi</taxon>
        <taxon>Dikarya</taxon>
        <taxon>Ascomycota</taxon>
        <taxon>Saccharomycotina</taxon>
        <taxon>Saccharomycetes</taxon>
        <taxon>Saccharomycetales</taxon>
        <taxon>Saccharomycetaceae</taxon>
        <taxon>Saccharomyces</taxon>
    </lineage>
</organism>
<name>OPI8_YEAST</name>